<proteinExistence type="evidence at transcript level"/>
<protein>
    <recommendedName>
        <fullName evidence="5">Actin-binding protein WASF1</fullName>
    </recommendedName>
    <alternativeName>
        <fullName>Protein WAVE-1</fullName>
    </alternativeName>
    <alternativeName>
        <fullName>Wiskott-Aldrich syndrome protein family member 1</fullName>
        <shortName>WASP family protein member 1</shortName>
    </alternativeName>
</protein>
<feature type="chain" id="PRO_0000314290" description="Actin-binding protein WASF1">
    <location>
        <begin position="1"/>
        <end position="559"/>
    </location>
</feature>
<feature type="domain" description="WH2" evidence="3">
    <location>
        <begin position="497"/>
        <end position="514"/>
    </location>
</feature>
<feature type="region of interest" description="Disordered" evidence="4">
    <location>
        <begin position="170"/>
        <end position="202"/>
    </location>
</feature>
<feature type="region of interest" description="Disordered" evidence="4">
    <location>
        <begin position="304"/>
        <end position="383"/>
    </location>
</feature>
<feature type="region of interest" description="Disordered" evidence="4">
    <location>
        <begin position="412"/>
        <end position="490"/>
    </location>
</feature>
<feature type="compositionally biased region" description="Basic and acidic residues" evidence="4">
    <location>
        <begin position="182"/>
        <end position="202"/>
    </location>
</feature>
<feature type="compositionally biased region" description="Polar residues" evidence="4">
    <location>
        <begin position="304"/>
        <end position="313"/>
    </location>
</feature>
<feature type="compositionally biased region" description="Pro residues" evidence="4">
    <location>
        <begin position="322"/>
        <end position="332"/>
    </location>
</feature>
<feature type="compositionally biased region" description="Low complexity" evidence="4">
    <location>
        <begin position="333"/>
        <end position="346"/>
    </location>
</feature>
<feature type="compositionally biased region" description="Pro residues" evidence="4">
    <location>
        <begin position="347"/>
        <end position="360"/>
    </location>
</feature>
<feature type="compositionally biased region" description="Pro residues" evidence="4">
    <location>
        <begin position="423"/>
        <end position="437"/>
    </location>
</feature>
<feature type="compositionally biased region" description="Pro residues" evidence="4">
    <location>
        <begin position="460"/>
        <end position="477"/>
    </location>
</feature>
<feature type="modified residue" description="Asymmetric dimethylarginine; alternate" evidence="1">
    <location>
        <position position="341"/>
    </location>
</feature>
<feature type="modified residue" description="Omega-N-methylarginine; alternate" evidence="1">
    <location>
        <position position="341"/>
    </location>
</feature>
<feature type="modified residue" description="Phosphoserine" evidence="2">
    <location>
        <position position="489"/>
    </location>
</feature>
<comment type="function">
    <text evidence="1 2">Downstream effector molecule involved in the transmission of signals from tyrosine kinase receptors and small GTPases to the actin cytoskeleton. Promotes formation of actin filaments. Part of the WAVE complex that regulates lamellipodia formation. The WAVE complex regulates actin filament reorganization via its interaction with the Arp2/3 complex (By similarity). As component of the WAVE1 complex, required for BDNF-NTRK2 endocytic trafficking and signaling from early endosomes (By similarity). Also involved in the regulation of mitochondrial dynamics (By similarity).</text>
</comment>
<comment type="subunit">
    <text evidence="1 2">Component of the WAVE1 complex composed of ABI2, CYFIP1 or CYFIP2, BRK1, NCKAP1 and WASF1/WAVE1. Within the complex, a heterodimer containing NCKAP1 and CYFIP1 interacts with a heterotrimer formed by WAVE1, ABI2 and BRK1. CYFIP2 binds to activated RAC1 which causes the complex to dissociate, releasing activated WASF1. The complex can also be activated by NCK1. Binds actin and the Arp2/3 complex. Interacts with BAIAP2. Interacts with SHANK3; the interaction mediates the association of SHANK3 with the WAVE1 complex. Interacts with ABI1 (via N-terminus) (By similarity). Interacts with SORBS2; this interaction greatly enhances phosphorylation by ABL1 and dephosphorylation by PTPN12 and might mediate partial to focal adhesion sites.</text>
</comment>
<comment type="subcellular location">
    <subcellularLocation>
        <location evidence="2">Cytoplasm</location>
        <location evidence="2">Cytoskeleton</location>
    </subcellularLocation>
    <subcellularLocation>
        <location evidence="1">Synapse</location>
    </subcellularLocation>
    <subcellularLocation>
        <location evidence="2">Cell junction</location>
        <location evidence="2">Focal adhesion</location>
    </subcellularLocation>
    <text evidence="1 2">Dot-like pattern in the cytoplasm. Concentrated in Rac-regulated membrane-ruffling areas. Partial translocation to focal adhesion sites might be mediated by interaction with SORBS2 (By similarity). In neurons, colocalizes with activated NTRK2 after BDNF addition in endocytic sites through the association with TMEM108 (By similarity).</text>
</comment>
<comment type="domain">
    <text evidence="2">Binds the Arp2/3 complex through the C-terminal region and actin through verprolin homology (VPH) domain.</text>
</comment>
<comment type="similarity">
    <text evidence="5">Belongs to the SCAR/WAVE family.</text>
</comment>
<gene>
    <name type="primary">WASF1</name>
    <name type="synonym">WAVE1</name>
</gene>
<evidence type="ECO:0000250" key="1">
    <source>
        <dbReference type="UniProtKB" id="Q8R5H6"/>
    </source>
</evidence>
<evidence type="ECO:0000250" key="2">
    <source>
        <dbReference type="UniProtKB" id="Q92558"/>
    </source>
</evidence>
<evidence type="ECO:0000255" key="3">
    <source>
        <dbReference type="PROSITE-ProRule" id="PRU00406"/>
    </source>
</evidence>
<evidence type="ECO:0000256" key="4">
    <source>
        <dbReference type="SAM" id="MobiDB-lite"/>
    </source>
</evidence>
<evidence type="ECO:0000305" key="5"/>
<organism>
    <name type="scientific">Pongo abelii</name>
    <name type="common">Sumatran orangutan</name>
    <name type="synonym">Pongo pygmaeus abelii</name>
    <dbReference type="NCBI Taxonomy" id="9601"/>
    <lineage>
        <taxon>Eukaryota</taxon>
        <taxon>Metazoa</taxon>
        <taxon>Chordata</taxon>
        <taxon>Craniata</taxon>
        <taxon>Vertebrata</taxon>
        <taxon>Euteleostomi</taxon>
        <taxon>Mammalia</taxon>
        <taxon>Eutheria</taxon>
        <taxon>Euarchontoglires</taxon>
        <taxon>Primates</taxon>
        <taxon>Haplorrhini</taxon>
        <taxon>Catarrhini</taxon>
        <taxon>Hominidae</taxon>
        <taxon>Pongo</taxon>
    </lineage>
</organism>
<keyword id="KW-0009">Actin-binding</keyword>
<keyword id="KW-0965">Cell junction</keyword>
<keyword id="KW-0963">Cytoplasm</keyword>
<keyword id="KW-0206">Cytoskeleton</keyword>
<keyword id="KW-0488">Methylation</keyword>
<keyword id="KW-0597">Phosphoprotein</keyword>
<keyword id="KW-1185">Reference proteome</keyword>
<keyword id="KW-0770">Synapse</keyword>
<dbReference type="EMBL" id="CR926067">
    <property type="protein sequence ID" value="CAI29695.1"/>
    <property type="molecule type" value="mRNA"/>
</dbReference>
<dbReference type="RefSeq" id="NP_001127108.1">
    <property type="nucleotide sequence ID" value="NM_001133636.1"/>
</dbReference>
<dbReference type="RefSeq" id="XP_054412898.1">
    <property type="nucleotide sequence ID" value="XM_054556923.2"/>
</dbReference>
<dbReference type="RefSeq" id="XP_054412900.1">
    <property type="nucleotide sequence ID" value="XM_054556925.2"/>
</dbReference>
<dbReference type="RefSeq" id="XP_054412902.1">
    <property type="nucleotide sequence ID" value="XM_054556927.2"/>
</dbReference>
<dbReference type="RefSeq" id="XP_054412903.1">
    <property type="nucleotide sequence ID" value="XM_054556928.2"/>
</dbReference>
<dbReference type="RefSeq" id="XP_063580759.1">
    <property type="nucleotide sequence ID" value="XM_063724689.1"/>
</dbReference>
<dbReference type="RefSeq" id="XP_063580760.1">
    <property type="nucleotide sequence ID" value="XM_063724690.1"/>
</dbReference>
<dbReference type="RefSeq" id="XP_063580761.1">
    <property type="nucleotide sequence ID" value="XM_063724691.1"/>
</dbReference>
<dbReference type="RefSeq" id="XP_063580762.1">
    <property type="nucleotide sequence ID" value="XM_063724692.1"/>
</dbReference>
<dbReference type="RefSeq" id="XP_063580763.1">
    <property type="nucleotide sequence ID" value="XM_063724693.1"/>
</dbReference>
<dbReference type="RefSeq" id="XP_063580764.1">
    <property type="nucleotide sequence ID" value="XM_063724694.1"/>
</dbReference>
<dbReference type="RefSeq" id="XP_063580765.1">
    <property type="nucleotide sequence ID" value="XM_063724695.1"/>
</dbReference>
<dbReference type="RefSeq" id="XP_063580766.1">
    <property type="nucleotide sequence ID" value="XM_063724696.1"/>
</dbReference>
<dbReference type="SMR" id="Q5NVG8"/>
<dbReference type="FunCoup" id="Q5NVG8">
    <property type="interactions" value="1770"/>
</dbReference>
<dbReference type="STRING" id="9601.ENSPPYP00000018938"/>
<dbReference type="GeneID" id="100174148"/>
<dbReference type="KEGG" id="pon:100174148"/>
<dbReference type="CTD" id="8936"/>
<dbReference type="eggNOG" id="KOG1830">
    <property type="taxonomic scope" value="Eukaryota"/>
</dbReference>
<dbReference type="InParanoid" id="Q5NVG8"/>
<dbReference type="OrthoDB" id="1060785at2759"/>
<dbReference type="Proteomes" id="UP000001595">
    <property type="component" value="Unplaced"/>
</dbReference>
<dbReference type="GO" id="GO:0005856">
    <property type="term" value="C:cytoskeleton"/>
    <property type="evidence" value="ECO:0007669"/>
    <property type="project" value="UniProtKB-SubCell"/>
</dbReference>
<dbReference type="GO" id="GO:0005925">
    <property type="term" value="C:focal adhesion"/>
    <property type="evidence" value="ECO:0007669"/>
    <property type="project" value="UniProtKB-SubCell"/>
</dbReference>
<dbReference type="GO" id="GO:0030027">
    <property type="term" value="C:lamellipodium"/>
    <property type="evidence" value="ECO:0007669"/>
    <property type="project" value="TreeGrafter"/>
</dbReference>
<dbReference type="GO" id="GO:0031209">
    <property type="term" value="C:SCAR complex"/>
    <property type="evidence" value="ECO:0007669"/>
    <property type="project" value="TreeGrafter"/>
</dbReference>
<dbReference type="GO" id="GO:0045202">
    <property type="term" value="C:synapse"/>
    <property type="evidence" value="ECO:0007669"/>
    <property type="project" value="UniProtKB-SubCell"/>
</dbReference>
<dbReference type="GO" id="GO:0003779">
    <property type="term" value="F:actin binding"/>
    <property type="evidence" value="ECO:0007669"/>
    <property type="project" value="UniProtKB-KW"/>
</dbReference>
<dbReference type="GO" id="GO:0071933">
    <property type="term" value="F:Arp2/3 complex binding"/>
    <property type="evidence" value="ECO:0007669"/>
    <property type="project" value="TreeGrafter"/>
</dbReference>
<dbReference type="GO" id="GO:0034237">
    <property type="term" value="F:protein kinase A regulatory subunit binding"/>
    <property type="evidence" value="ECO:0007669"/>
    <property type="project" value="TreeGrafter"/>
</dbReference>
<dbReference type="GO" id="GO:0030036">
    <property type="term" value="P:actin cytoskeleton organization"/>
    <property type="evidence" value="ECO:0000250"/>
    <property type="project" value="UniProtKB"/>
</dbReference>
<dbReference type="GO" id="GO:1990416">
    <property type="term" value="P:cellular response to brain-derived neurotrophic factor stimulus"/>
    <property type="evidence" value="ECO:0000250"/>
    <property type="project" value="UniProtKB"/>
</dbReference>
<dbReference type="GO" id="GO:0072673">
    <property type="term" value="P:lamellipodium morphogenesis"/>
    <property type="evidence" value="ECO:0000250"/>
    <property type="project" value="UniProtKB"/>
</dbReference>
<dbReference type="GO" id="GO:0007005">
    <property type="term" value="P:mitochondrion organization"/>
    <property type="evidence" value="ECO:0000250"/>
    <property type="project" value="UniProtKB"/>
</dbReference>
<dbReference type="GO" id="GO:2000601">
    <property type="term" value="P:positive regulation of Arp2/3 complex-mediated actin nucleation"/>
    <property type="evidence" value="ECO:0007669"/>
    <property type="project" value="TreeGrafter"/>
</dbReference>
<dbReference type="GO" id="GO:0006898">
    <property type="term" value="P:receptor-mediated endocytosis"/>
    <property type="evidence" value="ECO:0000250"/>
    <property type="project" value="UniProtKB"/>
</dbReference>
<dbReference type="CDD" id="cd22071">
    <property type="entry name" value="WH2_WAVE-1"/>
    <property type="match status" value="1"/>
</dbReference>
<dbReference type="FunFam" id="1.20.5.340:FF:000012">
    <property type="entry name" value="Wiskott-Aldrich syndrome protein family member 1"/>
    <property type="match status" value="1"/>
</dbReference>
<dbReference type="Gene3D" id="1.20.5.340">
    <property type="match status" value="1"/>
</dbReference>
<dbReference type="Gene3D" id="6.10.280.150">
    <property type="match status" value="2"/>
</dbReference>
<dbReference type="InterPro" id="IPR028288">
    <property type="entry name" value="SCAR/WAVE_fam"/>
</dbReference>
<dbReference type="InterPro" id="IPR003124">
    <property type="entry name" value="WH2_dom"/>
</dbReference>
<dbReference type="PANTHER" id="PTHR12902:SF8">
    <property type="entry name" value="ACTIN-BINDING PROTEIN WASF1"/>
    <property type="match status" value="1"/>
</dbReference>
<dbReference type="PANTHER" id="PTHR12902">
    <property type="entry name" value="WASP-1"/>
    <property type="match status" value="1"/>
</dbReference>
<dbReference type="Pfam" id="PF02205">
    <property type="entry name" value="WH2"/>
    <property type="match status" value="1"/>
</dbReference>
<dbReference type="SMART" id="SM00246">
    <property type="entry name" value="WH2"/>
    <property type="match status" value="1"/>
</dbReference>
<dbReference type="PROSITE" id="PS51082">
    <property type="entry name" value="WH2"/>
    <property type="match status" value="1"/>
</dbReference>
<name>WASF1_PONAB</name>
<reference key="1">
    <citation type="submission" date="2004-11" db="EMBL/GenBank/DDBJ databases">
        <authorList>
            <consortium name="The German cDNA consortium"/>
        </authorList>
    </citation>
    <scope>NUCLEOTIDE SEQUENCE [LARGE SCALE MRNA]</scope>
    <source>
        <tissue>Brain cortex</tissue>
    </source>
</reference>
<sequence>MPLVKRNIDPRHLCHTALPRGIKNELECVTNISLANIIRQLSSLSKYAEDIFGELFNEAHSFSFRVNSLQERVDRLSVSVTQLDPKEEELSLQDITMRKAFRSSTIQDQQLFDRKTLPIPLQETYDVCEQPPPLNILTPYRDDGKEGLKFYTNPSYFFDLWKEKMLQDTEDKRKEKRKQKQKNLDRPHEPEKVPRAPHDRRREWQKLAQGPELAEDDANLLHKHIEVANGPASHFETRPQTYVDHMDGSYSLSALPFSQMSELLTRAEERVLVRPHEPPPPPPMHGAGEAKPIPTCISSATGLIENRPQSPATGRTPVFVSPTPPPPPPPLPSALSTSSLRASMTSTPPPPVPPPPPPPATALQAPAVPPPPAPLQIAPGVLHPAPPPIAPPLVQPSPPVARAAPVCETVPVHPLPQGEVQGLPPPPPPPPLPPPGIRPSSPVTVTALAHPPSGLHPTPSTAPGPHVPLMPPSPPSQVIPASEPKRHPSTLPVISDARSVLLEAIRKGIQLRKVEEQREQEAKHERIENDVATILSRRIAVEYSDSEDDSEFDEVDWLE</sequence>
<accession>Q5NVG8</accession>